<organism>
    <name type="scientific">Chlorobium phaeobacteroides (strain BS1)</name>
    <dbReference type="NCBI Taxonomy" id="331678"/>
    <lineage>
        <taxon>Bacteria</taxon>
        <taxon>Pseudomonadati</taxon>
        <taxon>Chlorobiota</taxon>
        <taxon>Chlorobiia</taxon>
        <taxon>Chlorobiales</taxon>
        <taxon>Chlorobiaceae</taxon>
        <taxon>Chlorobium/Pelodictyon group</taxon>
        <taxon>Chlorobium</taxon>
    </lineage>
</organism>
<comment type="function">
    <text evidence="1">Catalyzes the reversible reaction in which hydroxymethyl group from 5,10-methylenetetrahydrofolate is transferred onto alpha-ketoisovalerate to form ketopantoate.</text>
</comment>
<comment type="catalytic activity">
    <reaction evidence="1">
        <text>3-methyl-2-oxobutanoate + (6R)-5,10-methylene-5,6,7,8-tetrahydrofolate + H2O = 2-dehydropantoate + (6S)-5,6,7,8-tetrahydrofolate</text>
        <dbReference type="Rhea" id="RHEA:11824"/>
        <dbReference type="ChEBI" id="CHEBI:11561"/>
        <dbReference type="ChEBI" id="CHEBI:11851"/>
        <dbReference type="ChEBI" id="CHEBI:15377"/>
        <dbReference type="ChEBI" id="CHEBI:15636"/>
        <dbReference type="ChEBI" id="CHEBI:57453"/>
        <dbReference type="EC" id="2.1.2.11"/>
    </reaction>
</comment>
<comment type="cofactor">
    <cofactor evidence="1">
        <name>Mg(2+)</name>
        <dbReference type="ChEBI" id="CHEBI:18420"/>
    </cofactor>
    <text evidence="1">Binds 1 Mg(2+) ion per subunit.</text>
</comment>
<comment type="pathway">
    <text evidence="1">Cofactor biosynthesis; (R)-pantothenate biosynthesis; (R)-pantoate from 3-methyl-2-oxobutanoate: step 1/2.</text>
</comment>
<comment type="subunit">
    <text evidence="1">Homodecamer; pentamer of dimers.</text>
</comment>
<comment type="subcellular location">
    <subcellularLocation>
        <location evidence="1">Cytoplasm</location>
    </subcellularLocation>
</comment>
<comment type="similarity">
    <text evidence="1">Belongs to the PanB family.</text>
</comment>
<protein>
    <recommendedName>
        <fullName evidence="1">3-methyl-2-oxobutanoate hydroxymethyltransferase</fullName>
        <ecNumber evidence="1">2.1.2.11</ecNumber>
    </recommendedName>
    <alternativeName>
        <fullName evidence="1">Ketopantoate hydroxymethyltransferase</fullName>
        <shortName evidence="1">KPHMT</shortName>
    </alternativeName>
</protein>
<evidence type="ECO:0000255" key="1">
    <source>
        <dbReference type="HAMAP-Rule" id="MF_00156"/>
    </source>
</evidence>
<reference key="1">
    <citation type="submission" date="2008-06" db="EMBL/GenBank/DDBJ databases">
        <title>Complete sequence of Chlorobium phaeobacteroides BS1.</title>
        <authorList>
            <consortium name="US DOE Joint Genome Institute"/>
            <person name="Lucas S."/>
            <person name="Copeland A."/>
            <person name="Lapidus A."/>
            <person name="Glavina del Rio T."/>
            <person name="Dalin E."/>
            <person name="Tice H."/>
            <person name="Bruce D."/>
            <person name="Goodwin L."/>
            <person name="Pitluck S."/>
            <person name="Schmutz J."/>
            <person name="Larimer F."/>
            <person name="Land M."/>
            <person name="Hauser L."/>
            <person name="Kyrpides N."/>
            <person name="Ovchinnikova G."/>
            <person name="Li T."/>
            <person name="Liu Z."/>
            <person name="Zhao F."/>
            <person name="Overmann J."/>
            <person name="Bryant D.A."/>
            <person name="Richardson P."/>
        </authorList>
    </citation>
    <scope>NUCLEOTIDE SEQUENCE [LARGE SCALE GENOMIC DNA]</scope>
    <source>
        <strain>BS1</strain>
    </source>
</reference>
<keyword id="KW-0963">Cytoplasm</keyword>
<keyword id="KW-0460">Magnesium</keyword>
<keyword id="KW-0479">Metal-binding</keyword>
<keyword id="KW-0566">Pantothenate biosynthesis</keyword>
<keyword id="KW-0808">Transferase</keyword>
<proteinExistence type="inferred from homology"/>
<sequence>MKRDSGQKLPHVTTRRLLDMKEQGEKIAMLTAYDYTTARILDRSGVDVILVGDSVSNVFSGHNTTLPITIEEMIYHAKAVVRGVQAETSRSMVVIDMPFMSYQLSSEEALRNAGKIMKDNECDAVKMEGGKVVVDTVKRITDVGIPVMGHLGLIPQSIYKFGSYKVRAREQKEAEELLRDAVLLEQAGAFALVLEKIPADLAAEVTRTVGIPTIGIGAGSFCDGQVLVINDMLGLNTEFHPRFVRRYADLDGVIFDAVTGYVDDVRNGQFPAEDESY</sequence>
<gene>
    <name evidence="1" type="primary">panB</name>
    <name type="ordered locus">Cphamn1_1008</name>
</gene>
<accession>B3EQ18</accession>
<dbReference type="EC" id="2.1.2.11" evidence="1"/>
<dbReference type="EMBL" id="CP001101">
    <property type="protein sequence ID" value="ACE03950.1"/>
    <property type="molecule type" value="Genomic_DNA"/>
</dbReference>
<dbReference type="SMR" id="B3EQ18"/>
<dbReference type="STRING" id="331678.Cphamn1_1008"/>
<dbReference type="KEGG" id="cpb:Cphamn1_1008"/>
<dbReference type="eggNOG" id="COG0413">
    <property type="taxonomic scope" value="Bacteria"/>
</dbReference>
<dbReference type="HOGENOM" id="CLU_036645_1_0_10"/>
<dbReference type="OrthoDB" id="9781789at2"/>
<dbReference type="UniPathway" id="UPA00028">
    <property type="reaction ID" value="UER00003"/>
</dbReference>
<dbReference type="GO" id="GO:0005737">
    <property type="term" value="C:cytoplasm"/>
    <property type="evidence" value="ECO:0007669"/>
    <property type="project" value="UniProtKB-SubCell"/>
</dbReference>
<dbReference type="GO" id="GO:0003864">
    <property type="term" value="F:3-methyl-2-oxobutanoate hydroxymethyltransferase activity"/>
    <property type="evidence" value="ECO:0007669"/>
    <property type="project" value="UniProtKB-UniRule"/>
</dbReference>
<dbReference type="GO" id="GO:0000287">
    <property type="term" value="F:magnesium ion binding"/>
    <property type="evidence" value="ECO:0007669"/>
    <property type="project" value="TreeGrafter"/>
</dbReference>
<dbReference type="GO" id="GO:0015940">
    <property type="term" value="P:pantothenate biosynthetic process"/>
    <property type="evidence" value="ECO:0007669"/>
    <property type="project" value="UniProtKB-UniRule"/>
</dbReference>
<dbReference type="CDD" id="cd06557">
    <property type="entry name" value="KPHMT-like"/>
    <property type="match status" value="1"/>
</dbReference>
<dbReference type="FunFam" id="3.20.20.60:FF:000003">
    <property type="entry name" value="3-methyl-2-oxobutanoate hydroxymethyltransferase"/>
    <property type="match status" value="1"/>
</dbReference>
<dbReference type="Gene3D" id="3.20.20.60">
    <property type="entry name" value="Phosphoenolpyruvate-binding domains"/>
    <property type="match status" value="1"/>
</dbReference>
<dbReference type="HAMAP" id="MF_00156">
    <property type="entry name" value="PanB"/>
    <property type="match status" value="1"/>
</dbReference>
<dbReference type="InterPro" id="IPR003700">
    <property type="entry name" value="Pantoate_hydroxy_MeTrfase"/>
</dbReference>
<dbReference type="InterPro" id="IPR015813">
    <property type="entry name" value="Pyrv/PenolPyrv_kinase-like_dom"/>
</dbReference>
<dbReference type="InterPro" id="IPR040442">
    <property type="entry name" value="Pyrv_kinase-like_dom_sf"/>
</dbReference>
<dbReference type="NCBIfam" id="TIGR00222">
    <property type="entry name" value="panB"/>
    <property type="match status" value="1"/>
</dbReference>
<dbReference type="NCBIfam" id="NF001452">
    <property type="entry name" value="PRK00311.1"/>
    <property type="match status" value="1"/>
</dbReference>
<dbReference type="PANTHER" id="PTHR20881">
    <property type="entry name" value="3-METHYL-2-OXOBUTANOATE HYDROXYMETHYLTRANSFERASE"/>
    <property type="match status" value="1"/>
</dbReference>
<dbReference type="PANTHER" id="PTHR20881:SF0">
    <property type="entry name" value="3-METHYL-2-OXOBUTANOATE HYDROXYMETHYLTRANSFERASE"/>
    <property type="match status" value="1"/>
</dbReference>
<dbReference type="Pfam" id="PF02548">
    <property type="entry name" value="Pantoate_transf"/>
    <property type="match status" value="1"/>
</dbReference>
<dbReference type="PIRSF" id="PIRSF000388">
    <property type="entry name" value="Pantoate_hydroxy_MeTrfase"/>
    <property type="match status" value="1"/>
</dbReference>
<dbReference type="SUPFAM" id="SSF51621">
    <property type="entry name" value="Phosphoenolpyruvate/pyruvate domain"/>
    <property type="match status" value="1"/>
</dbReference>
<feature type="chain" id="PRO_1000096951" description="3-methyl-2-oxobutanoate hydroxymethyltransferase">
    <location>
        <begin position="1"/>
        <end position="277"/>
    </location>
</feature>
<feature type="active site" description="Proton acceptor" evidence="1">
    <location>
        <position position="195"/>
    </location>
</feature>
<feature type="binding site" evidence="1">
    <location>
        <begin position="53"/>
        <end position="54"/>
    </location>
    <ligand>
        <name>3-methyl-2-oxobutanoate</name>
        <dbReference type="ChEBI" id="CHEBI:11851"/>
    </ligand>
</feature>
<feature type="binding site" evidence="1">
    <location>
        <position position="53"/>
    </location>
    <ligand>
        <name>Mg(2+)</name>
        <dbReference type="ChEBI" id="CHEBI:18420"/>
    </ligand>
</feature>
<feature type="binding site" evidence="1">
    <location>
        <position position="96"/>
    </location>
    <ligand>
        <name>3-methyl-2-oxobutanoate</name>
        <dbReference type="ChEBI" id="CHEBI:11851"/>
    </ligand>
</feature>
<feature type="binding site" evidence="1">
    <location>
        <position position="96"/>
    </location>
    <ligand>
        <name>Mg(2+)</name>
        <dbReference type="ChEBI" id="CHEBI:18420"/>
    </ligand>
</feature>
<feature type="binding site" evidence="1">
    <location>
        <position position="126"/>
    </location>
    <ligand>
        <name>3-methyl-2-oxobutanoate</name>
        <dbReference type="ChEBI" id="CHEBI:11851"/>
    </ligand>
</feature>
<feature type="binding site" evidence="1">
    <location>
        <position position="128"/>
    </location>
    <ligand>
        <name>Mg(2+)</name>
        <dbReference type="ChEBI" id="CHEBI:18420"/>
    </ligand>
</feature>
<name>PANB_CHLPB</name>